<comment type="function">
    <text evidence="1">Binds together with bS18 to 16S ribosomal RNA.</text>
</comment>
<comment type="similarity">
    <text evidence="1">Belongs to the bacterial ribosomal protein bS6 family.</text>
</comment>
<keyword id="KW-1185">Reference proteome</keyword>
<keyword id="KW-0687">Ribonucleoprotein</keyword>
<keyword id="KW-0689">Ribosomal protein</keyword>
<keyword id="KW-0694">RNA-binding</keyword>
<keyword id="KW-0699">rRNA-binding</keyword>
<evidence type="ECO:0000255" key="1">
    <source>
        <dbReference type="HAMAP-Rule" id="MF_00360"/>
    </source>
</evidence>
<evidence type="ECO:0000256" key="2">
    <source>
        <dbReference type="SAM" id="MobiDB-lite"/>
    </source>
</evidence>
<evidence type="ECO:0000305" key="3"/>
<name>RS6_CAMC5</name>
<feature type="chain" id="PRO_1000005238" description="Small ribosomal subunit protein bS6">
    <location>
        <begin position="1"/>
        <end position="142"/>
    </location>
</feature>
<feature type="region of interest" description="Disordered" evidence="2">
    <location>
        <begin position="113"/>
        <end position="142"/>
    </location>
</feature>
<feature type="compositionally biased region" description="Basic and acidic residues" evidence="2">
    <location>
        <begin position="113"/>
        <end position="136"/>
    </location>
</feature>
<organism>
    <name type="scientific">Campylobacter curvus (strain 525.92)</name>
    <dbReference type="NCBI Taxonomy" id="360105"/>
    <lineage>
        <taxon>Bacteria</taxon>
        <taxon>Pseudomonadati</taxon>
        <taxon>Campylobacterota</taxon>
        <taxon>Epsilonproteobacteria</taxon>
        <taxon>Campylobacterales</taxon>
        <taxon>Campylobacteraceae</taxon>
        <taxon>Campylobacter</taxon>
    </lineage>
</organism>
<protein>
    <recommendedName>
        <fullName evidence="1">Small ribosomal subunit protein bS6</fullName>
    </recommendedName>
    <alternativeName>
        <fullName evidence="3">30S ribosomal protein S6</fullName>
    </alternativeName>
</protein>
<sequence>MKHYELLFILKPTLTEEEVKAKVDFVKEVITKNGGEIATVVEMGTRKLAYTIKKYERGTYFVIYYKAPPTLLAELTRNIRITEDIIRFLSVKYENKREIAAWERLCKGIKQTIKKEPREPREPRAPREPKAEKIEEQTFSEE</sequence>
<dbReference type="EMBL" id="CP000767">
    <property type="protein sequence ID" value="EAU00688.1"/>
    <property type="molecule type" value="Genomic_DNA"/>
</dbReference>
<dbReference type="RefSeq" id="WP_011992122.1">
    <property type="nucleotide sequence ID" value="NC_009715.2"/>
</dbReference>
<dbReference type="SMR" id="A7GXQ4"/>
<dbReference type="STRING" id="360105.CCV52592_1585"/>
<dbReference type="KEGG" id="ccv:CCV52592_1585"/>
<dbReference type="HOGENOM" id="CLU_113441_4_1_7"/>
<dbReference type="OrthoDB" id="9812702at2"/>
<dbReference type="Proteomes" id="UP000006380">
    <property type="component" value="Chromosome"/>
</dbReference>
<dbReference type="GO" id="GO:0022627">
    <property type="term" value="C:cytosolic small ribosomal subunit"/>
    <property type="evidence" value="ECO:0007669"/>
    <property type="project" value="TreeGrafter"/>
</dbReference>
<dbReference type="GO" id="GO:0070181">
    <property type="term" value="F:small ribosomal subunit rRNA binding"/>
    <property type="evidence" value="ECO:0007669"/>
    <property type="project" value="TreeGrafter"/>
</dbReference>
<dbReference type="GO" id="GO:0003735">
    <property type="term" value="F:structural constituent of ribosome"/>
    <property type="evidence" value="ECO:0007669"/>
    <property type="project" value="InterPro"/>
</dbReference>
<dbReference type="GO" id="GO:0006412">
    <property type="term" value="P:translation"/>
    <property type="evidence" value="ECO:0007669"/>
    <property type="project" value="UniProtKB-UniRule"/>
</dbReference>
<dbReference type="CDD" id="cd00473">
    <property type="entry name" value="bS6"/>
    <property type="match status" value="1"/>
</dbReference>
<dbReference type="Gene3D" id="3.30.70.60">
    <property type="match status" value="1"/>
</dbReference>
<dbReference type="HAMAP" id="MF_00360">
    <property type="entry name" value="Ribosomal_bS6"/>
    <property type="match status" value="1"/>
</dbReference>
<dbReference type="InterPro" id="IPR000529">
    <property type="entry name" value="Ribosomal_bS6"/>
</dbReference>
<dbReference type="InterPro" id="IPR035980">
    <property type="entry name" value="Ribosomal_bS6_sf"/>
</dbReference>
<dbReference type="InterPro" id="IPR020814">
    <property type="entry name" value="Ribosomal_S6_plastid/chlpt"/>
</dbReference>
<dbReference type="InterPro" id="IPR014717">
    <property type="entry name" value="Transl_elong_EF1B/ribsomal_bS6"/>
</dbReference>
<dbReference type="NCBIfam" id="TIGR00166">
    <property type="entry name" value="S6"/>
    <property type="match status" value="1"/>
</dbReference>
<dbReference type="PANTHER" id="PTHR21011">
    <property type="entry name" value="MITOCHONDRIAL 28S RIBOSOMAL PROTEIN S6"/>
    <property type="match status" value="1"/>
</dbReference>
<dbReference type="PANTHER" id="PTHR21011:SF1">
    <property type="entry name" value="SMALL RIBOSOMAL SUBUNIT PROTEIN BS6M"/>
    <property type="match status" value="1"/>
</dbReference>
<dbReference type="Pfam" id="PF01250">
    <property type="entry name" value="Ribosomal_S6"/>
    <property type="match status" value="1"/>
</dbReference>
<dbReference type="SUPFAM" id="SSF54995">
    <property type="entry name" value="Ribosomal protein S6"/>
    <property type="match status" value="1"/>
</dbReference>
<accession>A7GXQ4</accession>
<proteinExistence type="inferred from homology"/>
<reference key="1">
    <citation type="submission" date="2007-07" db="EMBL/GenBank/DDBJ databases">
        <title>Genome sequence of Campylobacter curvus 525.92 isolated from human feces.</title>
        <authorList>
            <person name="Fouts D.E."/>
            <person name="Mongodin E.F."/>
            <person name="Puiu D."/>
            <person name="Sebastian Y."/>
            <person name="Miller W.G."/>
            <person name="Mandrell R.E."/>
            <person name="Lastovica A.J."/>
            <person name="Nelson K.E."/>
        </authorList>
    </citation>
    <scope>NUCLEOTIDE SEQUENCE [LARGE SCALE GENOMIC DNA]</scope>
    <source>
        <strain>525.92</strain>
    </source>
</reference>
<gene>
    <name evidence="1" type="primary">rpsF</name>
    <name type="ordered locus">Ccur92_06920</name>
    <name type="ORF">CCV52592_1585</name>
</gene>